<protein>
    <recommendedName>
        <fullName evidence="10">Putative NAD(P)H nitroreductase Rv3131</fullName>
    </recommendedName>
</protein>
<accession>P9WIZ7</accession>
<accession>L0TD88</accession>
<accession>P95195</accession>
<accession>Q7D627</accession>
<name>Y3131_MYCTU</name>
<dbReference type="EMBL" id="AL123456">
    <property type="protein sequence ID" value="CCP45941.1"/>
    <property type="status" value="ALT_INIT"/>
    <property type="molecule type" value="Genomic_DNA"/>
</dbReference>
<dbReference type="PIR" id="D70645">
    <property type="entry name" value="D70645"/>
</dbReference>
<dbReference type="RefSeq" id="NP_217647.3">
    <property type="nucleotide sequence ID" value="NC_000962.3"/>
</dbReference>
<dbReference type="SMR" id="P9WIZ7"/>
<dbReference type="STRING" id="83332.Rv3131"/>
<dbReference type="PaxDb" id="83332-Rv3131"/>
<dbReference type="DNASU" id="888838"/>
<dbReference type="GeneID" id="888838"/>
<dbReference type="KEGG" id="mtu:Rv3131"/>
<dbReference type="TubercuList" id="Rv3131"/>
<dbReference type="eggNOG" id="COG0778">
    <property type="taxonomic scope" value="Bacteria"/>
</dbReference>
<dbReference type="InParanoid" id="P9WIZ7"/>
<dbReference type="OrthoDB" id="8156917at2"/>
<dbReference type="Proteomes" id="UP000001584">
    <property type="component" value="Chromosome"/>
</dbReference>
<dbReference type="GO" id="GO:0005829">
    <property type="term" value="C:cytosol"/>
    <property type="evidence" value="ECO:0007005"/>
    <property type="project" value="MTBBASE"/>
</dbReference>
<dbReference type="GO" id="GO:0005886">
    <property type="term" value="C:plasma membrane"/>
    <property type="evidence" value="ECO:0007005"/>
    <property type="project" value="MTBBASE"/>
</dbReference>
<dbReference type="GO" id="GO:0016491">
    <property type="term" value="F:oxidoreductase activity"/>
    <property type="evidence" value="ECO:0000318"/>
    <property type="project" value="GO_Central"/>
</dbReference>
<dbReference type="Gene3D" id="3.40.109.10">
    <property type="entry name" value="NADH Oxidase"/>
    <property type="match status" value="2"/>
</dbReference>
<dbReference type="InterPro" id="IPR000415">
    <property type="entry name" value="Nitroreductase-like"/>
</dbReference>
<dbReference type="InterPro" id="IPR050627">
    <property type="entry name" value="Nitroreductase/BluB"/>
</dbReference>
<dbReference type="NCBIfam" id="NF047509">
    <property type="entry name" value="Rv3131_FMN_oxido"/>
    <property type="match status" value="1"/>
</dbReference>
<dbReference type="PANTHER" id="PTHR23026:SF123">
    <property type="entry name" value="NAD(P)H NITROREDUCTASE RV3131-RELATED"/>
    <property type="match status" value="1"/>
</dbReference>
<dbReference type="PANTHER" id="PTHR23026">
    <property type="entry name" value="NADPH NITROREDUCTASE"/>
    <property type="match status" value="1"/>
</dbReference>
<dbReference type="SUPFAM" id="SSF55469">
    <property type="entry name" value="FMN-dependent nitroreductase-like"/>
    <property type="match status" value="1"/>
</dbReference>
<evidence type="ECO:0000255" key="1"/>
<evidence type="ECO:0000269" key="2">
    <source>
    </source>
</evidence>
<evidence type="ECO:0000269" key="3">
    <source>
    </source>
</evidence>
<evidence type="ECO:0000269" key="4">
    <source>
    </source>
</evidence>
<evidence type="ECO:0000269" key="5">
    <source>
    </source>
</evidence>
<evidence type="ECO:0000269" key="6">
    <source>
    </source>
</evidence>
<evidence type="ECO:0000269" key="7">
    <source>
    </source>
</evidence>
<evidence type="ECO:0000269" key="8">
    <source>
    </source>
</evidence>
<evidence type="ECO:0000269" key="9">
    <source>
    </source>
</evidence>
<evidence type="ECO:0000305" key="10"/>
<proteinExistence type="evidence at protein level"/>
<organism>
    <name type="scientific">Mycobacterium tuberculosis (strain ATCC 25618 / H37Rv)</name>
    <dbReference type="NCBI Taxonomy" id="83332"/>
    <lineage>
        <taxon>Bacteria</taxon>
        <taxon>Bacillati</taxon>
        <taxon>Actinomycetota</taxon>
        <taxon>Actinomycetes</taxon>
        <taxon>Mycobacteriales</taxon>
        <taxon>Mycobacteriaceae</taxon>
        <taxon>Mycobacterium</taxon>
        <taxon>Mycobacterium tuberculosis complex</taxon>
    </lineage>
</organism>
<comment type="function">
    <text evidence="8">Stimulates pro-inflammatory cytokine expression via TLR2 signaling pathway. Activation of TLR2 results in the phosphorylation and activation of NF-kappa-B. Also induces TLR2 expression. May influence the innate immune responses to facilitate the survival of M.tuberculosis in the granulomatous microenvironment.</text>
</comment>
<comment type="cofactor">
    <cofactor evidence="10">
        <name>FMN</name>
        <dbReference type="ChEBI" id="CHEBI:58210"/>
    </cofactor>
</comment>
<comment type="subunit">
    <text evidence="8">Interacts with human TLR2.</text>
</comment>
<comment type="induction">
    <text evidence="2 3 4 5">A member of the dormancy regulon. Induced in response to reduced oxygen tension (hypoxia), low levels of nitric oxide (NO) and carbon monoxide (CO). It is hoped that this regulon will give insight into the latent, or dormant phase of infection.</text>
</comment>
<comment type="biotechnology">
    <text evidence="7">This protein serves as an immunogenic antigen, inducing gamma-interferon responses in whole-blood cultures from M.tuberculosis-exposed adults in Uganda, and The Gambia but not from South Africa, indicating this might be a good vaccine candidate.</text>
</comment>
<comment type="miscellaneous">
    <text evidence="6">Was identified as a high-confidence drug target.</text>
</comment>
<comment type="similarity">
    <text evidence="10">Belongs to the nitroreductase family.</text>
</comment>
<comment type="sequence caution" evidence="9">
    <conflict type="erroneous initiation">
        <sequence resource="EMBL-CDS" id="CCP45941"/>
    </conflict>
    <text>Truncated N-terminus.</text>
</comment>
<sequence>MTAAVDGKGPAAMNTHFPDAETVRTVLTLAVRAPSIHNTQPWRWRVCPTSLELFSRPDMQLRSTDPDGRELILSCGVALHHCVVALASLGWQAKVNRFPDPKDRCHLATIGVQPLVPDQADVALAAAIPRRRTDRRAYSCWPVPGGDIALMAARAARGGVMLRQVSALDRMKAIVAQAVLDHVTDEEYLRELTIWSGRYGSVAGVPARNEPPSDPSAPIPGRLFAGPGLSQPSDVLPADDGAAILALGTETDDRLARLRAGEAASIVLLTATAMGLACCPITEPLEIAKTRDAVRAEVFGAGGYPQMLLRVGWAPINADPLPPTPRRELSQVVEWPEELLRQRC</sequence>
<keyword id="KW-0903">Direct protein sequencing</keyword>
<keyword id="KW-0285">Flavoprotein</keyword>
<keyword id="KW-0288">FMN</keyword>
<keyword id="KW-0520">NAD</keyword>
<keyword id="KW-0521">NADP</keyword>
<keyword id="KW-0560">Oxidoreductase</keyword>
<keyword id="KW-1185">Reference proteome</keyword>
<keyword id="KW-0843">Virulence</keyword>
<feature type="initiator methionine" description="Removed" evidence="9">
    <location>
        <position position="1"/>
    </location>
</feature>
<feature type="chain" id="PRO_0000392943" description="Putative NAD(P)H nitroreductase Rv3131">
    <location>
        <begin position="2"/>
        <end position="344"/>
    </location>
</feature>
<feature type="binding site" evidence="1">
    <location>
        <begin position="40"/>
        <end position="44"/>
    </location>
    <ligand>
        <name>FMN</name>
        <dbReference type="ChEBI" id="CHEBI:58210"/>
    </ligand>
</feature>
<feature type="binding site" evidence="1">
    <location>
        <position position="326"/>
    </location>
    <ligand>
        <name>FMN</name>
        <dbReference type="ChEBI" id="CHEBI:58210"/>
    </ligand>
</feature>
<gene>
    <name type="ordered locus">Rv3131</name>
</gene>
<reference key="1">
    <citation type="journal article" date="1998" name="Nature">
        <title>Deciphering the biology of Mycobacterium tuberculosis from the complete genome sequence.</title>
        <authorList>
            <person name="Cole S.T."/>
            <person name="Brosch R."/>
            <person name="Parkhill J."/>
            <person name="Garnier T."/>
            <person name="Churcher C.M."/>
            <person name="Harris D.E."/>
            <person name="Gordon S.V."/>
            <person name="Eiglmeier K."/>
            <person name="Gas S."/>
            <person name="Barry C.E. III"/>
            <person name="Tekaia F."/>
            <person name="Badcock K."/>
            <person name="Basham D."/>
            <person name="Brown D."/>
            <person name="Chillingworth T."/>
            <person name="Connor R."/>
            <person name="Davies R.M."/>
            <person name="Devlin K."/>
            <person name="Feltwell T."/>
            <person name="Gentles S."/>
            <person name="Hamlin N."/>
            <person name="Holroyd S."/>
            <person name="Hornsby T."/>
            <person name="Jagels K."/>
            <person name="Krogh A."/>
            <person name="McLean J."/>
            <person name="Moule S."/>
            <person name="Murphy L.D."/>
            <person name="Oliver S."/>
            <person name="Osborne J."/>
            <person name="Quail M.A."/>
            <person name="Rajandream M.A."/>
            <person name="Rogers J."/>
            <person name="Rutter S."/>
            <person name="Seeger K."/>
            <person name="Skelton S."/>
            <person name="Squares S."/>
            <person name="Squares R."/>
            <person name="Sulston J.E."/>
            <person name="Taylor K."/>
            <person name="Whitehead S."/>
            <person name="Barrell B.G."/>
        </authorList>
    </citation>
    <scope>NUCLEOTIDE SEQUENCE [LARGE SCALE GENOMIC DNA]</scope>
    <source>
        <strain>ATCC 25618 / H37Rv</strain>
    </source>
</reference>
<reference key="2">
    <citation type="journal article" date="2022" name="Genomics">
        <title>Deep N-terminomics of Mycobacterium tuberculosis H37Rv extensively correct annotated encoding genes.</title>
        <authorList>
            <person name="Shi J."/>
            <person name="Meng S."/>
            <person name="Wan L."/>
            <person name="Zhang Z."/>
            <person name="Jiang S."/>
            <person name="Zhu H."/>
            <person name="Dai E."/>
            <person name="Chang L."/>
            <person name="Gao H."/>
            <person name="Wan K."/>
            <person name="Zhang L."/>
            <person name="Zhao X."/>
            <person name="Liu H."/>
            <person name="Lyu Z."/>
            <person name="Zhang Y."/>
            <person name="Xu P."/>
        </authorList>
    </citation>
    <scope>PROTEIN SEQUENCE OF 2-24</scope>
    <scope>SEQUENCE REVISION TO N-TERMINUS</scope>
    <source>
        <strain>H37Rv</strain>
    </source>
</reference>
<reference key="3">
    <citation type="journal article" date="2001" name="Proc. Natl. Acad. Sci. U.S.A.">
        <title>Regulation of the Mycobacterium tuberculosis hypoxic response gene encoding alpha -crystallin.</title>
        <authorList>
            <person name="Sherman D.R."/>
            <person name="Voskuil M."/>
            <person name="Schnappinger D."/>
            <person name="Liao R."/>
            <person name="Harrell M.I."/>
            <person name="Schoolnik G.K."/>
        </authorList>
    </citation>
    <scope>INDUCTION BY HYPOXIA</scope>
    <source>
        <strain>ATCC 25618 / H37Rv</strain>
    </source>
</reference>
<reference key="4">
    <citation type="journal article" date="2003" name="J. Exp. Med.">
        <title>Inhibition of respiration by nitric oxide induces a Mycobacterium tuberculosis dormancy program.</title>
        <authorList>
            <person name="Voskuil M.I."/>
            <person name="Schnappinger D."/>
            <person name="Visconti K.C."/>
            <person name="Harrell M.I."/>
            <person name="Dolganov G.M."/>
            <person name="Sherman D.R."/>
            <person name="Schoolnik G.K."/>
        </authorList>
    </citation>
    <scope>INDUCTION BY NITRIC OXIDE (NO) AND BY HYPOXIA</scope>
    <scope>DORMANCY REGULON</scope>
    <source>
        <strain>ATCC 25618 / H37Rv</strain>
    </source>
</reference>
<reference key="5">
    <citation type="journal article" date="2008" name="BMC Syst. Biol.">
        <title>targetTB: a target identification pipeline for Mycobacterium tuberculosis through an interactome, reactome and genome-scale structural analysis.</title>
        <authorList>
            <person name="Raman K."/>
            <person name="Yeturu K."/>
            <person name="Chandra N."/>
        </authorList>
    </citation>
    <scope>IDENTIFICATION AS A DRUG TARGET [LARGE SCALE ANALYSIS]</scope>
</reference>
<reference key="6">
    <citation type="journal article" date="2008" name="Cell Host Microbe">
        <title>Mycobacterium tuberculosis senses host-derived carbon monoxide during macrophage infection.</title>
        <authorList>
            <person name="Shiloh M.U."/>
            <person name="Manzanillo P."/>
            <person name="Cox J.S."/>
        </authorList>
    </citation>
    <scope>INDUCTION BY CARBON MONOXIDE (CO)</scope>
    <source>
        <strain>ATCC 35801 / TMC 107 / Erdman</strain>
    </source>
</reference>
<reference key="7">
    <citation type="journal article" date="2008" name="J. Biol. Chem.">
        <title>Heme oxygenase-1-derived carbon monoxide induces the Mycobacterium tuberculosis dormancy regulon.</title>
        <authorList>
            <person name="Kumar A."/>
            <person name="Deshane J.S."/>
            <person name="Crossman D.K."/>
            <person name="Bolisetty S."/>
            <person name="Yan B.S."/>
            <person name="Kramnik I."/>
            <person name="Agarwal A."/>
            <person name="Steyn A.J."/>
        </authorList>
    </citation>
    <scope>INDUCTION BY CARBON MONOXIDE (CO)</scope>
    <scope>DORMANCY REGULON</scope>
    <source>
        <strain>ATCC 25618 / H37Rv</strain>
    </source>
</reference>
<reference key="8">
    <citation type="journal article" date="2009" name="Clin. Vaccine Immunol.">
        <title>Immunogenicity of novel DosR regulon-encoded candidate antigens of Mycobacterium tuberculosis in three high-burden populations in Africa.</title>
        <authorList>
            <person name="Black G.F."/>
            <person name="Thiel B.A."/>
            <person name="Ota M.O."/>
            <person name="Parida S.K."/>
            <person name="Adegbola R."/>
            <person name="Boom W.H."/>
            <person name="Dockrell H.M."/>
            <person name="Franken K.L."/>
            <person name="Friggen A.H."/>
            <person name="Hill P.C."/>
            <person name="Klein M.R."/>
            <person name="Lalor M.K."/>
            <person name="Mayanja H."/>
            <person name="Schoolnik G."/>
            <person name="Stanley K."/>
            <person name="Weldingh K."/>
            <person name="Kaufmann S.H."/>
            <person name="Walzl G."/>
            <person name="Ottenhoff T.H."/>
        </authorList>
    </citation>
    <scope>BIOTECHNOLOGY</scope>
</reference>
<reference key="9">
    <citation type="journal article" date="2011" name="Mol. Cell. Proteomics">
        <title>Proteogenomic analysis of Mycobacterium tuberculosis by high resolution mass spectrometry.</title>
        <authorList>
            <person name="Kelkar D.S."/>
            <person name="Kumar D."/>
            <person name="Kumar P."/>
            <person name="Balakrishnan L."/>
            <person name="Muthusamy B."/>
            <person name="Yadav A.K."/>
            <person name="Shrivastava P."/>
            <person name="Marimuthu A."/>
            <person name="Anand S."/>
            <person name="Sundaram H."/>
            <person name="Kingsbury R."/>
            <person name="Harsha H.C."/>
            <person name="Nair B."/>
            <person name="Prasad T.S."/>
            <person name="Chauhan D.S."/>
            <person name="Katoch K."/>
            <person name="Katoch V.M."/>
            <person name="Kumar P."/>
            <person name="Chaerkady R."/>
            <person name="Ramachandran S."/>
            <person name="Dash D."/>
            <person name="Pandey A."/>
        </authorList>
    </citation>
    <scope>IDENTIFICATION BY MASS SPECTROMETRY [LARGE SCALE ANALYSIS]</scope>
    <source>
        <strain>ATCC 25618 / H37Rv</strain>
    </source>
</reference>
<reference key="10">
    <citation type="journal article" date="2016" name="Sci. Rep.">
        <title>A putative nitroreductase from the DosR regulon of Mycobacterium tuberculosis induces pro-inflammatory cytokine expression via TLR2 signaling pathway.</title>
        <authorList>
            <person name="Peddireddy V."/>
            <person name="Doddam S.N."/>
            <person name="Qureshi I.A."/>
            <person name="Yerra P."/>
            <person name="Ahmed N."/>
        </authorList>
    </citation>
    <scope>FUNCTION</scope>
    <scope>INTERACTION WITH TLR2</scope>
    <source>
        <strain>H37Rv</strain>
    </source>
</reference>